<comment type="function">
    <text evidence="1">Regulates ciliary localization of the BBSome complex. Together with the BBSome complex, controls SMO ciliary trafficking and contributes to the sonic hedgehog (SHH) pathway regulation. May play a role in neurite outgrowth. May have tumor suppressor function (By similarity).</text>
</comment>
<comment type="subunit">
    <text evidence="1">Self-associates. Interacts with BBS9; the interaction mediates the association of LZTL1 with the BBsome complex and regulates BBSome ciliary trafficking (By similarity).</text>
</comment>
<comment type="subcellular location">
    <subcellularLocation>
        <location evidence="1">Cytoplasm</location>
    </subcellularLocation>
</comment>
<comment type="similarity">
    <text evidence="3">Belongs to the LZTFL1 family.</text>
</comment>
<accession>Q5RBR4</accession>
<sequence>MAELGLNEHHQNEVINYMRFARSKRGLRLKTVDSCFQDLKESRLVEETFTIDEVSEVLNGLQAVVHSEVESELINTAYTNVLLLRQLFAQAEKWYLKLQTDISELENRELLEQVAEFEKAEITSSNKKPILDVTKPKLAPLNEGGTAELLNKEILRLQEENEKLKSRLKTVEIQATNALDEKSKLEKALQDLQLDQGNQKDFIKAQDLSNLENTVAALKSEFQKTLNDKTENQKSLEENLATAKHDLLRVQEQLHMAEKELEKKFQQTAAYRNMKEILTKKNDQIKDLRKRLAQYEPED</sequence>
<name>LZTL1_PONAB</name>
<keyword id="KW-0175">Coiled coil</keyword>
<keyword id="KW-0963">Cytoplasm</keyword>
<keyword id="KW-1185">Reference proteome</keyword>
<evidence type="ECO:0000250" key="1"/>
<evidence type="ECO:0000255" key="2"/>
<evidence type="ECO:0000305" key="3"/>
<proteinExistence type="evidence at transcript level"/>
<gene>
    <name type="primary">LZTFL1</name>
</gene>
<reference key="1">
    <citation type="submission" date="2004-11" db="EMBL/GenBank/DDBJ databases">
        <authorList>
            <consortium name="The German cDNA consortium"/>
        </authorList>
    </citation>
    <scope>NUCLEOTIDE SEQUENCE [LARGE SCALE MRNA]</scope>
    <source>
        <tissue>Kidney</tissue>
    </source>
</reference>
<feature type="chain" id="PRO_0000318761" description="Leucine zipper transcription factor-like protein 1">
    <location>
        <begin position="1"/>
        <end position="299"/>
    </location>
</feature>
<feature type="region of interest" description="Interaction with BSS9" evidence="1">
    <location>
        <begin position="145"/>
        <end position="299"/>
    </location>
</feature>
<feature type="coiled-coil region" evidence="2">
    <location>
        <begin position="96"/>
        <end position="296"/>
    </location>
</feature>
<protein>
    <recommendedName>
        <fullName>Leucine zipper transcription factor-like protein 1</fullName>
    </recommendedName>
</protein>
<organism>
    <name type="scientific">Pongo abelii</name>
    <name type="common">Sumatran orangutan</name>
    <name type="synonym">Pongo pygmaeus abelii</name>
    <dbReference type="NCBI Taxonomy" id="9601"/>
    <lineage>
        <taxon>Eukaryota</taxon>
        <taxon>Metazoa</taxon>
        <taxon>Chordata</taxon>
        <taxon>Craniata</taxon>
        <taxon>Vertebrata</taxon>
        <taxon>Euteleostomi</taxon>
        <taxon>Mammalia</taxon>
        <taxon>Eutheria</taxon>
        <taxon>Euarchontoglires</taxon>
        <taxon>Primates</taxon>
        <taxon>Haplorrhini</taxon>
        <taxon>Catarrhini</taxon>
        <taxon>Hominidae</taxon>
        <taxon>Pongo</taxon>
    </lineage>
</organism>
<dbReference type="EMBL" id="CR858573">
    <property type="protein sequence ID" value="CAH90796.1"/>
    <property type="molecule type" value="mRNA"/>
</dbReference>
<dbReference type="RefSeq" id="NP_001127335.1">
    <property type="nucleotide sequence ID" value="NM_001133863.2"/>
</dbReference>
<dbReference type="SMR" id="Q5RBR4"/>
<dbReference type="FunCoup" id="Q5RBR4">
    <property type="interactions" value="1737"/>
</dbReference>
<dbReference type="STRING" id="9601.ENSPPYP00000015594"/>
<dbReference type="Ensembl" id="ENSPPYT00000016215.3">
    <property type="protein sequence ID" value="ENSPPYP00000015594.2"/>
    <property type="gene ID" value="ENSPPYG00000013942.3"/>
</dbReference>
<dbReference type="GeneID" id="100174397"/>
<dbReference type="KEGG" id="pon:100174397"/>
<dbReference type="CTD" id="54585"/>
<dbReference type="eggNOG" id="ENOG502QRGB">
    <property type="taxonomic scope" value="Eukaryota"/>
</dbReference>
<dbReference type="GeneTree" id="ENSGT00390000016415"/>
<dbReference type="HOGENOM" id="CLU_083519_0_0_1"/>
<dbReference type="InParanoid" id="Q5RBR4"/>
<dbReference type="OMA" id="QMEGTTA"/>
<dbReference type="OrthoDB" id="313412at2759"/>
<dbReference type="TreeFam" id="TF329023"/>
<dbReference type="Proteomes" id="UP000001595">
    <property type="component" value="Chromosome 3"/>
</dbReference>
<dbReference type="GO" id="GO:0005737">
    <property type="term" value="C:cytoplasm"/>
    <property type="evidence" value="ECO:0007669"/>
    <property type="project" value="UniProtKB-SubCell"/>
</dbReference>
<dbReference type="GO" id="GO:1903565">
    <property type="term" value="P:negative regulation of protein localization to cilium"/>
    <property type="evidence" value="ECO:0007669"/>
    <property type="project" value="TreeGrafter"/>
</dbReference>
<dbReference type="InterPro" id="IPR026157">
    <property type="entry name" value="LZTFL1"/>
</dbReference>
<dbReference type="PANTHER" id="PTHR21635">
    <property type="entry name" value="LEUCINE ZIPPER TRANSCRIPTION FACTOR LIKE"/>
    <property type="match status" value="1"/>
</dbReference>
<dbReference type="PANTHER" id="PTHR21635:SF0">
    <property type="entry name" value="LEUCINE ZIPPER TRANSCRIPTION FACTOR-LIKE PROTEIN 1"/>
    <property type="match status" value="1"/>
</dbReference>
<dbReference type="Pfam" id="PF15294">
    <property type="entry name" value="Leu_zip"/>
    <property type="match status" value="1"/>
</dbReference>